<evidence type="ECO:0000255" key="1">
    <source>
        <dbReference type="HAMAP-Rule" id="MF_01379"/>
    </source>
</evidence>
<reference key="1">
    <citation type="journal article" date="1995" name="Am. J. Bot.">
        <title>PsbA in the marine chromophyte Heterosigma carterae: evolutionary analysis and comparative structure of the D1 carboxyl terminus.</title>
        <authorList>
            <person name="Hardison L.K."/>
            <person name="Boczar B.A."/>
            <person name="Cattolico R."/>
        </authorList>
    </citation>
    <scope>NUCLEOTIDE SEQUENCE [GENOMIC DNA]</scope>
</reference>
<protein>
    <recommendedName>
        <fullName evidence="1">Photosystem II protein D1</fullName>
        <shortName evidence="1">PSII D1 protein</shortName>
        <ecNumber evidence="1">1.10.3.9</ecNumber>
    </recommendedName>
    <alternativeName>
        <fullName evidence="1">Photosystem II Q(B) protein</fullName>
    </alternativeName>
</protein>
<feature type="chain" id="PRO_0000090444" description="Photosystem II protein D1" evidence="1">
    <location>
        <begin position="1"/>
        <end position="344"/>
    </location>
</feature>
<feature type="propeptide" id="PRO_0000316517" evidence="1">
    <location>
        <begin position="345"/>
        <end position="360"/>
    </location>
</feature>
<feature type="transmembrane region" description="Helical" evidence="1">
    <location>
        <begin position="29"/>
        <end position="46"/>
    </location>
</feature>
<feature type="transmembrane region" description="Helical" evidence="1">
    <location>
        <begin position="118"/>
        <end position="133"/>
    </location>
</feature>
<feature type="transmembrane region" description="Helical" evidence="1">
    <location>
        <begin position="142"/>
        <end position="156"/>
    </location>
</feature>
<feature type="transmembrane region" description="Helical" evidence="1">
    <location>
        <begin position="197"/>
        <end position="218"/>
    </location>
</feature>
<feature type="transmembrane region" description="Helical" evidence="1">
    <location>
        <begin position="274"/>
        <end position="288"/>
    </location>
</feature>
<feature type="binding site" description="axial binding residue" evidence="1">
    <location>
        <position position="118"/>
    </location>
    <ligand>
        <name>chlorophyll a</name>
        <dbReference type="ChEBI" id="CHEBI:58416"/>
        <label>ChlzD1</label>
    </ligand>
    <ligandPart>
        <name>Mg</name>
        <dbReference type="ChEBI" id="CHEBI:25107"/>
    </ligandPart>
</feature>
<feature type="binding site" evidence="1">
    <location>
        <position position="126"/>
    </location>
    <ligand>
        <name>pheophytin a</name>
        <dbReference type="ChEBI" id="CHEBI:136840"/>
        <label>D1</label>
    </ligand>
</feature>
<feature type="binding site" evidence="1">
    <location>
        <position position="170"/>
    </location>
    <ligand>
        <name>[CaMn4O5] cluster</name>
        <dbReference type="ChEBI" id="CHEBI:189552"/>
    </ligand>
</feature>
<feature type="binding site" evidence="1">
    <location>
        <position position="189"/>
    </location>
    <ligand>
        <name>[CaMn4O5] cluster</name>
        <dbReference type="ChEBI" id="CHEBI:189552"/>
    </ligand>
</feature>
<feature type="binding site" description="axial binding residue" evidence="1">
    <location>
        <position position="198"/>
    </location>
    <ligand>
        <name>chlorophyll a</name>
        <dbReference type="ChEBI" id="CHEBI:58416"/>
        <label>PD1</label>
    </ligand>
    <ligandPart>
        <name>Mg</name>
        <dbReference type="ChEBI" id="CHEBI:25107"/>
    </ligandPart>
</feature>
<feature type="binding site" evidence="1">
    <location>
        <position position="215"/>
    </location>
    <ligand>
        <name>a quinone</name>
        <dbReference type="ChEBI" id="CHEBI:132124"/>
        <label>B</label>
    </ligand>
</feature>
<feature type="binding site" evidence="1">
    <location>
        <position position="215"/>
    </location>
    <ligand>
        <name>Fe cation</name>
        <dbReference type="ChEBI" id="CHEBI:24875"/>
        <note>ligand shared with heterodimeric partner</note>
    </ligand>
</feature>
<feature type="binding site" evidence="1">
    <location>
        <begin position="264"/>
        <end position="265"/>
    </location>
    <ligand>
        <name>a quinone</name>
        <dbReference type="ChEBI" id="CHEBI:132124"/>
        <label>B</label>
    </ligand>
</feature>
<feature type="binding site" evidence="1">
    <location>
        <position position="272"/>
    </location>
    <ligand>
        <name>Fe cation</name>
        <dbReference type="ChEBI" id="CHEBI:24875"/>
        <note>ligand shared with heterodimeric partner</note>
    </ligand>
</feature>
<feature type="binding site" evidence="1">
    <location>
        <position position="332"/>
    </location>
    <ligand>
        <name>[CaMn4O5] cluster</name>
        <dbReference type="ChEBI" id="CHEBI:189552"/>
    </ligand>
</feature>
<feature type="binding site" evidence="1">
    <location>
        <position position="333"/>
    </location>
    <ligand>
        <name>[CaMn4O5] cluster</name>
        <dbReference type="ChEBI" id="CHEBI:189552"/>
    </ligand>
</feature>
<feature type="binding site" evidence="1">
    <location>
        <position position="342"/>
    </location>
    <ligand>
        <name>[CaMn4O5] cluster</name>
        <dbReference type="ChEBI" id="CHEBI:189552"/>
    </ligand>
</feature>
<feature type="binding site" evidence="1">
    <location>
        <position position="344"/>
    </location>
    <ligand>
        <name>[CaMn4O5] cluster</name>
        <dbReference type="ChEBI" id="CHEBI:189552"/>
    </ligand>
</feature>
<feature type="site" description="Tyrosine radical intermediate" evidence="1">
    <location>
        <position position="161"/>
    </location>
</feature>
<feature type="site" description="Stabilizes free radical intermediate" evidence="1">
    <location>
        <position position="190"/>
    </location>
</feature>
<feature type="site" description="Cleavage; by CTPA" evidence="1">
    <location>
        <begin position="344"/>
        <end position="345"/>
    </location>
</feature>
<accession>Q32389</accession>
<geneLocation type="chloroplast"/>
<comment type="function">
    <text evidence="1">Photosystem II (PSII) is a light-driven water:plastoquinone oxidoreductase that uses light energy to abstract electrons from H(2)O, generating O(2) and a proton gradient subsequently used for ATP formation. It consists of a core antenna complex that captures photons, and an electron transfer chain that converts photonic excitation into a charge separation. The D1/D2 (PsbA/PsbD) reaction center heterodimer binds P680, the primary electron donor of PSII as well as several subsequent electron acceptors.</text>
</comment>
<comment type="catalytic activity">
    <reaction evidence="1">
        <text>2 a plastoquinone + 4 hnu + 2 H2O = 2 a plastoquinol + O2</text>
        <dbReference type="Rhea" id="RHEA:36359"/>
        <dbReference type="Rhea" id="RHEA-COMP:9561"/>
        <dbReference type="Rhea" id="RHEA-COMP:9562"/>
        <dbReference type="ChEBI" id="CHEBI:15377"/>
        <dbReference type="ChEBI" id="CHEBI:15379"/>
        <dbReference type="ChEBI" id="CHEBI:17757"/>
        <dbReference type="ChEBI" id="CHEBI:30212"/>
        <dbReference type="ChEBI" id="CHEBI:62192"/>
        <dbReference type="EC" id="1.10.3.9"/>
    </reaction>
</comment>
<comment type="cofactor">
    <text evidence="1">The D1/D2 heterodimer binds P680, chlorophylls that are the primary electron donor of PSII, and subsequent electron acceptors. It shares a non-heme iron and each subunit binds pheophytin, quinone, additional chlorophylls, carotenoids and lipids. D1 provides most of the ligands for the Mn4-Ca-O5 cluster of the oxygen-evolving complex (OEC). There is also a Cl(-1) ion associated with D1 and D2, which is required for oxygen evolution. The PSII complex binds additional chlorophylls, carotenoids and specific lipids.</text>
</comment>
<comment type="subunit">
    <text evidence="1">PSII is composed of 1 copy each of membrane proteins PsbA, PsbB, PsbC, PsbD, PsbE, PsbF, PsbH, PsbI, PsbJ, PsbK, PsbL, PsbM, PsbT, PsbX, PsbY, PsbZ, Psb30/Ycf12, at least 3 peripheral proteins of the oxygen-evolving complex and a large number of cofactors. It forms dimeric complexes.</text>
</comment>
<comment type="subcellular location">
    <subcellularLocation>
        <location evidence="1">Plastid</location>
        <location evidence="1">Chloroplast thylakoid membrane</location>
        <topology evidence="1">Multi-pass membrane protein</topology>
    </subcellularLocation>
</comment>
<comment type="PTM">
    <text evidence="1">Tyr-161 forms a radical intermediate that is referred to as redox-active TyrZ, YZ or Y-Z.</text>
</comment>
<comment type="PTM">
    <text evidence="1">C-terminally processed by CTPA; processing is essential to allow assembly of the oxygen-evolving complex and thus photosynthetic growth.</text>
</comment>
<comment type="miscellaneous">
    <text evidence="1">2 of the reaction center chlorophylls (ChlD1 and ChlD2) are entirely coordinated by water.</text>
</comment>
<comment type="miscellaneous">
    <text evidence="1">Herbicides such as atrazine, BNT, diuron or ioxynil bind in the Q(B) binding site and block subsequent electron transfer.</text>
</comment>
<comment type="similarity">
    <text evidence="1">Belongs to the reaction center PufL/M/PsbA/D family.</text>
</comment>
<sequence length="360" mass="39661">MTATLERRESFSLWERFCSWITSTENRLYIGWFGVLMIPTLLTATSCYIIAFIAAPPVDIDGIREPVAGSLMYGNNIITGAVIPSSNAIGVHFYPIWEAASLDEWLYNGGPYQLIVLHFLLGVASYMGREWELSYRLGMRPWIFVAFSAPVAAASAVFLVYPIGQGSFSDGMPLGISGTFNFMLVFQAEHNILMHPFHMAGVAGVFGGSLFSAMHGSLVTSSLIRETSEIESANYGYKFGQEEETYNIVAAHGYFGRLIFQYASFNNSRALHFFLAAWPVVGIWLTALGVSTMAFNLNGFNFNQSVVDSQGRVINTWADIINRADLGMEVMHERNAHNFPLDLASNEVLPVAVNAPAVNG</sequence>
<organism>
    <name type="scientific">Heterosigma akashiwo</name>
    <name type="common">Chromophytic alga</name>
    <name type="synonym">Heterosigma carterae</name>
    <dbReference type="NCBI Taxonomy" id="2829"/>
    <lineage>
        <taxon>Eukaryota</taxon>
        <taxon>Sar</taxon>
        <taxon>Stramenopiles</taxon>
        <taxon>Ochrophyta</taxon>
        <taxon>Raphidophyceae</taxon>
        <taxon>Chattonellales</taxon>
        <taxon>Chattonellaceae</taxon>
        <taxon>Heterosigma</taxon>
    </lineage>
</organism>
<dbReference type="EC" id="1.10.3.9" evidence="1"/>
<dbReference type="EMBL" id="U18090">
    <property type="protein sequence ID" value="AAA57555.1"/>
    <property type="molecule type" value="Genomic_DNA"/>
</dbReference>
<dbReference type="RefSeq" id="YP_001936311.1">
    <property type="nucleotide sequence ID" value="NC_010772.1"/>
</dbReference>
<dbReference type="RefSeq" id="YP_001936359.1">
    <property type="nucleotide sequence ID" value="NC_010772.1"/>
</dbReference>
<dbReference type="SMR" id="Q32389"/>
<dbReference type="GeneID" id="6335562"/>
<dbReference type="GeneID" id="6335736"/>
<dbReference type="GO" id="GO:0009535">
    <property type="term" value="C:chloroplast thylakoid membrane"/>
    <property type="evidence" value="ECO:0007669"/>
    <property type="project" value="UniProtKB-SubCell"/>
</dbReference>
<dbReference type="GO" id="GO:0009523">
    <property type="term" value="C:photosystem II"/>
    <property type="evidence" value="ECO:0007669"/>
    <property type="project" value="UniProtKB-KW"/>
</dbReference>
<dbReference type="GO" id="GO:0016168">
    <property type="term" value="F:chlorophyll binding"/>
    <property type="evidence" value="ECO:0007669"/>
    <property type="project" value="UniProtKB-UniRule"/>
</dbReference>
<dbReference type="GO" id="GO:0045156">
    <property type="term" value="F:electron transporter, transferring electrons within the cyclic electron transport pathway of photosynthesis activity"/>
    <property type="evidence" value="ECO:0007669"/>
    <property type="project" value="InterPro"/>
</dbReference>
<dbReference type="GO" id="GO:0005506">
    <property type="term" value="F:iron ion binding"/>
    <property type="evidence" value="ECO:0007669"/>
    <property type="project" value="UniProtKB-UniRule"/>
</dbReference>
<dbReference type="GO" id="GO:0016682">
    <property type="term" value="F:oxidoreductase activity, acting on diphenols and related substances as donors, oxygen as acceptor"/>
    <property type="evidence" value="ECO:0007669"/>
    <property type="project" value="UniProtKB-UniRule"/>
</dbReference>
<dbReference type="GO" id="GO:0009772">
    <property type="term" value="P:photosynthetic electron transport in photosystem II"/>
    <property type="evidence" value="ECO:0007669"/>
    <property type="project" value="InterPro"/>
</dbReference>
<dbReference type="GO" id="GO:0009635">
    <property type="term" value="P:response to herbicide"/>
    <property type="evidence" value="ECO:0007669"/>
    <property type="project" value="UniProtKB-KW"/>
</dbReference>
<dbReference type="CDD" id="cd09289">
    <property type="entry name" value="Photosystem-II_D1"/>
    <property type="match status" value="1"/>
</dbReference>
<dbReference type="FunFam" id="1.20.85.10:FF:000002">
    <property type="entry name" value="Photosystem II protein D1"/>
    <property type="match status" value="1"/>
</dbReference>
<dbReference type="Gene3D" id="1.20.85.10">
    <property type="entry name" value="Photosystem II protein D1-like"/>
    <property type="match status" value="1"/>
</dbReference>
<dbReference type="HAMAP" id="MF_01379">
    <property type="entry name" value="PSII_PsbA_D1"/>
    <property type="match status" value="1"/>
</dbReference>
<dbReference type="InterPro" id="IPR055266">
    <property type="entry name" value="D1/D2"/>
</dbReference>
<dbReference type="InterPro" id="IPR036854">
    <property type="entry name" value="Photo_II_D1/D2_sf"/>
</dbReference>
<dbReference type="InterPro" id="IPR000484">
    <property type="entry name" value="Photo_RC_L/M"/>
</dbReference>
<dbReference type="InterPro" id="IPR055265">
    <property type="entry name" value="Photo_RC_L/M_CS"/>
</dbReference>
<dbReference type="InterPro" id="IPR005867">
    <property type="entry name" value="PSII_D1"/>
</dbReference>
<dbReference type="NCBIfam" id="TIGR01151">
    <property type="entry name" value="psbA"/>
    <property type="match status" value="1"/>
</dbReference>
<dbReference type="PANTHER" id="PTHR33149:SF12">
    <property type="entry name" value="PHOTOSYSTEM II D2 PROTEIN"/>
    <property type="match status" value="1"/>
</dbReference>
<dbReference type="PANTHER" id="PTHR33149">
    <property type="entry name" value="PHOTOSYSTEM II PROTEIN D1"/>
    <property type="match status" value="1"/>
</dbReference>
<dbReference type="Pfam" id="PF00124">
    <property type="entry name" value="Photo_RC"/>
    <property type="match status" value="1"/>
</dbReference>
<dbReference type="PRINTS" id="PR00256">
    <property type="entry name" value="REACTNCENTRE"/>
</dbReference>
<dbReference type="SUPFAM" id="SSF81483">
    <property type="entry name" value="Bacterial photosystem II reaction centre, L and M subunits"/>
    <property type="match status" value="1"/>
</dbReference>
<dbReference type="PROSITE" id="PS00244">
    <property type="entry name" value="REACTION_CENTER"/>
    <property type="match status" value="1"/>
</dbReference>
<name>PSBA_HETAK</name>
<gene>
    <name evidence="1" type="primary">psbA</name>
</gene>
<proteinExistence type="inferred from homology"/>
<keyword id="KW-0106">Calcium</keyword>
<keyword id="KW-0148">Chlorophyll</keyword>
<keyword id="KW-0150">Chloroplast</keyword>
<keyword id="KW-0157">Chromophore</keyword>
<keyword id="KW-0249">Electron transport</keyword>
<keyword id="KW-0359">Herbicide resistance</keyword>
<keyword id="KW-0408">Iron</keyword>
<keyword id="KW-0460">Magnesium</keyword>
<keyword id="KW-0464">Manganese</keyword>
<keyword id="KW-0472">Membrane</keyword>
<keyword id="KW-0479">Metal-binding</keyword>
<keyword id="KW-0560">Oxidoreductase</keyword>
<keyword id="KW-0602">Photosynthesis</keyword>
<keyword id="KW-0604">Photosystem II</keyword>
<keyword id="KW-0934">Plastid</keyword>
<keyword id="KW-0793">Thylakoid</keyword>
<keyword id="KW-0812">Transmembrane</keyword>
<keyword id="KW-1133">Transmembrane helix</keyword>
<keyword id="KW-0813">Transport</keyword>